<comment type="function">
    <text evidence="2">4-methyl-2-oxopentanoate (MOA) reductase that reduces MOA, a possible intermediate in leucine synthesis, to D-leucate in a NADPH- or NADH-dependent manner, but with a preference for NADPH (PubMed:26615399). In addition to MOA, shows broad substrate specificity toward 2-keto acids (PubMed:26615399).</text>
</comment>
<comment type="catalytic activity">
    <reaction evidence="2">
        <text>(2R)-hydroxy-4-methylpentanoate + NADP(+) = 4-methyl-2-oxopentanoate + NADPH + H(+)</text>
        <dbReference type="Rhea" id="RHEA:12873"/>
        <dbReference type="ChEBI" id="CHEBI:15378"/>
        <dbReference type="ChEBI" id="CHEBI:17865"/>
        <dbReference type="ChEBI" id="CHEBI:55535"/>
        <dbReference type="ChEBI" id="CHEBI:57783"/>
        <dbReference type="ChEBI" id="CHEBI:58349"/>
        <dbReference type="EC" id="1.1.1.272"/>
    </reaction>
    <physiologicalReaction direction="right-to-left" evidence="2">
        <dbReference type="Rhea" id="RHEA:12875"/>
    </physiologicalReaction>
</comment>
<comment type="catalytic activity">
    <reaction evidence="2">
        <text>a (2R)-2-hydroxycarboxylate + NADP(+) = a 2-oxocarboxylate + NADPH + H(+)</text>
        <dbReference type="Rhea" id="RHEA:35735"/>
        <dbReference type="ChEBI" id="CHEBI:15378"/>
        <dbReference type="ChEBI" id="CHEBI:35179"/>
        <dbReference type="ChEBI" id="CHEBI:57783"/>
        <dbReference type="ChEBI" id="CHEBI:58314"/>
        <dbReference type="ChEBI" id="CHEBI:58349"/>
        <dbReference type="EC" id="1.1.1.272"/>
    </reaction>
    <physiologicalReaction direction="right-to-left" evidence="2">
        <dbReference type="Rhea" id="RHEA:35737"/>
    </physiologicalReaction>
</comment>
<comment type="biophysicochemical properties">
    <kinetics>
        <KM evidence="2">4.1 mM for 4-methyl-2-oxopentanoate (MOA)</KM>
        <KM evidence="2">61 mM for pyruvate</KM>
        <KM evidence="2">0.53 mM for hydroxypyruvate</KM>
        <KM evidence="2">0.75 mM for glyoxylate</KM>
        <KM evidence="2">20 mM for 3-methyl-2-oxovalerate</KM>
        <KM evidence="2">1.61 mM for phenylpyruvate</KM>
        <KM evidence="2">0.012 mM for NADPH</KM>
        <KM evidence="2">0.15 mM for NADH</KM>
        <text evidence="2">kcat is 15.0 sec(-1) with 4-methyl-2-oxopentanoate (MOA) as substrate. kcat is 140.0 sec(-1) with pyruvate as substrate. kcat is 10.0 sec(-1) with hydroxypyruvate as substrate. kcat is 11.0 sec(-1) with glyoxylate as substrate. kcat is 0.74 sec(-1) with 3-methyl-2-oxovalerate as substrate. kcat is 12.0 sec(-1) with phenylpyruvate as substrate. kcat is 140.0 sec(-1) with NADPH as substrate. kcat is 22.0 sec(-1) with NADH as substrate.</text>
    </kinetics>
    <phDependence>
        <text evidence="2">Optimum pH is 4.5 to 6.0.</text>
    </phDependence>
</comment>
<comment type="induction">
    <text evidence="2">Leucine and 4-methyl-2-oxopentanate (MOA) increase the expression 3.1- and 4.5-fold, respectively, whereas leucate represses the expression.</text>
</comment>
<comment type="biotechnology">
    <text evidence="2">Ethyl-2-hydroxy-4-methylpentanoate (ethyl leucate) contributes to a fruity flavor in Japanese sake and the strain overexpressing morA would help to ferment high-quality sake with an excellent flavor.</text>
</comment>
<comment type="similarity">
    <text evidence="4">Belongs to the D-isomer specific 2-hydroxyacid dehydrogenase family.</text>
</comment>
<protein>
    <recommendedName>
        <fullName evidence="3">4-methyl-2-oxopentanoate reductase A</fullName>
        <shortName evidence="3">MOA reductase A</shortName>
        <shortName evidence="3">MorA</shortName>
        <ecNumber evidence="2">1.1.1.272</ecNumber>
    </recommendedName>
    <alternativeName>
        <fullName evidence="3">2-hydroxyacid dehydrogenase D</fullName>
        <shortName evidence="3">2-HadhD</shortName>
    </alternativeName>
</protein>
<sequence>MPSALLIGEITHARKEWEELSSILTLTEFPSGTREDFIRNCKEGQYDDVLVIYRSNTSTKFTGPFDAELLAVLPKSLKYICHNGAGYDNIDVKGCTDKGIAVSSTPVAVNHATADVGIFLMIGALRQAYVPLSALRAGQWQGQTTLGRDPQGKVLGILGMGGIGREMANRAKAFGMKIQYHNRSRLSPELEGDATYVSFDELLASSDVLSLNLALNASTRHIIGEKEFQKMKDGIVIVNTARGALIDEKALVAALDSGKVLSAGLDVYENEPVVEQGLVNNPKVMLLPHIGTMTYETQKDMELLVLNNLRSAVEKGKMITLVPEQKNVF</sequence>
<reference key="1">
    <citation type="journal article" date="2005" name="Nature">
        <title>Genome sequencing and analysis of Aspergillus oryzae.</title>
        <authorList>
            <person name="Machida M."/>
            <person name="Asai K."/>
            <person name="Sano M."/>
            <person name="Tanaka T."/>
            <person name="Kumagai T."/>
            <person name="Terai G."/>
            <person name="Kusumoto K."/>
            <person name="Arima T."/>
            <person name="Akita O."/>
            <person name="Kashiwagi Y."/>
            <person name="Abe K."/>
            <person name="Gomi K."/>
            <person name="Horiuchi H."/>
            <person name="Kitamoto K."/>
            <person name="Kobayashi T."/>
            <person name="Takeuchi M."/>
            <person name="Denning D.W."/>
            <person name="Galagan J.E."/>
            <person name="Nierman W.C."/>
            <person name="Yu J."/>
            <person name="Archer D.B."/>
            <person name="Bennett J.W."/>
            <person name="Bhatnagar D."/>
            <person name="Cleveland T.E."/>
            <person name="Fedorova N.D."/>
            <person name="Gotoh O."/>
            <person name="Horikawa H."/>
            <person name="Hosoyama A."/>
            <person name="Ichinomiya M."/>
            <person name="Igarashi R."/>
            <person name="Iwashita K."/>
            <person name="Juvvadi P.R."/>
            <person name="Kato M."/>
            <person name="Kato Y."/>
            <person name="Kin T."/>
            <person name="Kokubun A."/>
            <person name="Maeda H."/>
            <person name="Maeyama N."/>
            <person name="Maruyama J."/>
            <person name="Nagasaki H."/>
            <person name="Nakajima T."/>
            <person name="Oda K."/>
            <person name="Okada K."/>
            <person name="Paulsen I."/>
            <person name="Sakamoto K."/>
            <person name="Sawano T."/>
            <person name="Takahashi M."/>
            <person name="Takase K."/>
            <person name="Terabayashi Y."/>
            <person name="Wortman J.R."/>
            <person name="Yamada O."/>
            <person name="Yamagata Y."/>
            <person name="Anazawa H."/>
            <person name="Hata Y."/>
            <person name="Koide Y."/>
            <person name="Komori T."/>
            <person name="Koyama Y."/>
            <person name="Minetoki T."/>
            <person name="Suharnan S."/>
            <person name="Tanaka A."/>
            <person name="Isono K."/>
            <person name="Kuhara S."/>
            <person name="Ogasawara N."/>
            <person name="Kikuchi H."/>
        </authorList>
    </citation>
    <scope>NUCLEOTIDE SEQUENCE [LARGE SCALE GENOMIC DNA]</scope>
    <source>
        <strain>ATCC 42149 / RIB 40</strain>
    </source>
</reference>
<reference key="2">
    <citation type="journal article" date="2016" name="Appl. Microbiol. Biotechnol.">
        <title>Novel 4-methyl-2-oxopentanoate reductase involved in synthesis of the Japanese sake flavor, ethyl leucate.</title>
        <authorList>
            <person name="Shimizu M."/>
            <person name="Yamamoto T."/>
            <person name="Okabe N."/>
            <person name="Sakai K."/>
            <person name="Koide E."/>
            <person name="Miyachi Y."/>
            <person name="Kurimoto M."/>
            <person name="Mochizuki M."/>
            <person name="Yoshino-Yasuda S."/>
            <person name="Mitsui S."/>
            <person name="Ito A."/>
            <person name="Murano H."/>
            <person name="Takaya N."/>
            <person name="Kato M."/>
        </authorList>
    </citation>
    <scope>FUNCTION</scope>
    <scope>CATALYTIC ACTIVITY</scope>
    <scope>BIOPHYSICOCHEMICAL PROPERTIES</scope>
    <scope>BIOTECHNOLOGY</scope>
    <scope>INDUCTION</scope>
</reference>
<accession>Q2U0N3</accession>
<proteinExistence type="evidence at protein level"/>
<gene>
    <name evidence="3" type="primary">morA</name>
    <name type="ORF">AO090011000368</name>
</gene>
<organism>
    <name type="scientific">Aspergillus oryzae (strain ATCC 42149 / RIB 40)</name>
    <name type="common">Yellow koji mold</name>
    <dbReference type="NCBI Taxonomy" id="510516"/>
    <lineage>
        <taxon>Eukaryota</taxon>
        <taxon>Fungi</taxon>
        <taxon>Dikarya</taxon>
        <taxon>Ascomycota</taxon>
        <taxon>Pezizomycotina</taxon>
        <taxon>Eurotiomycetes</taxon>
        <taxon>Eurotiomycetidae</taxon>
        <taxon>Eurotiales</taxon>
        <taxon>Aspergillaceae</taxon>
        <taxon>Aspergillus</taxon>
        <taxon>Aspergillus subgen. Circumdati</taxon>
    </lineage>
</organism>
<dbReference type="EC" id="1.1.1.272" evidence="2"/>
<dbReference type="EMBL" id="BA000055">
    <property type="protein sequence ID" value="BAE64882.1"/>
    <property type="molecule type" value="Genomic_DNA"/>
</dbReference>
<dbReference type="RefSeq" id="XP_001826015.1">
    <property type="nucleotide sequence ID" value="XM_001825963.2"/>
</dbReference>
<dbReference type="SMR" id="Q2U0N3"/>
<dbReference type="STRING" id="510516.Q2U0N3"/>
<dbReference type="EnsemblFungi" id="BAE64882">
    <property type="protein sequence ID" value="BAE64882"/>
    <property type="gene ID" value="AO090011000368"/>
</dbReference>
<dbReference type="GeneID" id="5998118"/>
<dbReference type="KEGG" id="aor:AO090011000368"/>
<dbReference type="VEuPathDB" id="FungiDB:AO090011000368"/>
<dbReference type="HOGENOM" id="CLU_019796_1_2_1"/>
<dbReference type="OMA" id="HMGTETC"/>
<dbReference type="OrthoDB" id="24003at5052"/>
<dbReference type="BioCyc" id="MetaCyc:MONOMER-19754"/>
<dbReference type="Proteomes" id="UP000006564">
    <property type="component" value="Chromosome 7"/>
</dbReference>
<dbReference type="GO" id="GO:0005829">
    <property type="term" value="C:cytosol"/>
    <property type="evidence" value="ECO:0007669"/>
    <property type="project" value="TreeGrafter"/>
</dbReference>
<dbReference type="GO" id="GO:0030267">
    <property type="term" value="F:glyoxylate reductase (NADPH) activity"/>
    <property type="evidence" value="ECO:0007669"/>
    <property type="project" value="TreeGrafter"/>
</dbReference>
<dbReference type="GO" id="GO:0016618">
    <property type="term" value="F:hydroxypyruvate reductase [NAD(P)H] activity"/>
    <property type="evidence" value="ECO:0007669"/>
    <property type="project" value="TreeGrafter"/>
</dbReference>
<dbReference type="GO" id="GO:0051287">
    <property type="term" value="F:NAD binding"/>
    <property type="evidence" value="ECO:0007669"/>
    <property type="project" value="InterPro"/>
</dbReference>
<dbReference type="CDD" id="cd12168">
    <property type="entry name" value="Mand_dh_like"/>
    <property type="match status" value="1"/>
</dbReference>
<dbReference type="FunFam" id="3.40.50.720:FF:000282">
    <property type="entry name" value="Glyoxylate reductase protein"/>
    <property type="match status" value="1"/>
</dbReference>
<dbReference type="Gene3D" id="3.40.50.720">
    <property type="entry name" value="NAD(P)-binding Rossmann-like Domain"/>
    <property type="match status" value="2"/>
</dbReference>
<dbReference type="InterPro" id="IPR050223">
    <property type="entry name" value="D-isomer_2-hydroxyacid_DH"/>
</dbReference>
<dbReference type="InterPro" id="IPR006139">
    <property type="entry name" value="D-isomer_2_OHA_DH_cat_dom"/>
</dbReference>
<dbReference type="InterPro" id="IPR029753">
    <property type="entry name" value="D-isomer_DH_CS"/>
</dbReference>
<dbReference type="InterPro" id="IPR029752">
    <property type="entry name" value="D-isomer_DH_CS1"/>
</dbReference>
<dbReference type="InterPro" id="IPR006140">
    <property type="entry name" value="D-isomer_DH_NAD-bd"/>
</dbReference>
<dbReference type="InterPro" id="IPR036291">
    <property type="entry name" value="NAD(P)-bd_dom_sf"/>
</dbReference>
<dbReference type="PANTHER" id="PTHR10996">
    <property type="entry name" value="2-HYDROXYACID DEHYDROGENASE-RELATED"/>
    <property type="match status" value="1"/>
</dbReference>
<dbReference type="PANTHER" id="PTHR10996:SF257">
    <property type="entry name" value="GLYOXYLATE REDUCTASE 1"/>
    <property type="match status" value="1"/>
</dbReference>
<dbReference type="Pfam" id="PF00389">
    <property type="entry name" value="2-Hacid_dh"/>
    <property type="match status" value="1"/>
</dbReference>
<dbReference type="Pfam" id="PF02826">
    <property type="entry name" value="2-Hacid_dh_C"/>
    <property type="match status" value="1"/>
</dbReference>
<dbReference type="SUPFAM" id="SSF52283">
    <property type="entry name" value="Formate/glycerate dehydrogenase catalytic domain-like"/>
    <property type="match status" value="1"/>
</dbReference>
<dbReference type="SUPFAM" id="SSF51735">
    <property type="entry name" value="NAD(P)-binding Rossmann-fold domains"/>
    <property type="match status" value="1"/>
</dbReference>
<dbReference type="PROSITE" id="PS00065">
    <property type="entry name" value="D_2_HYDROXYACID_DH_1"/>
    <property type="match status" value="1"/>
</dbReference>
<dbReference type="PROSITE" id="PS00671">
    <property type="entry name" value="D_2_HYDROXYACID_DH_3"/>
    <property type="match status" value="1"/>
</dbReference>
<evidence type="ECO:0000250" key="1">
    <source>
        <dbReference type="UniProtKB" id="Q9I3W9"/>
    </source>
</evidence>
<evidence type="ECO:0000269" key="2">
    <source>
    </source>
</evidence>
<evidence type="ECO:0000303" key="3">
    <source>
    </source>
</evidence>
<evidence type="ECO:0000305" key="4"/>
<keyword id="KW-0520">NAD</keyword>
<keyword id="KW-0560">Oxidoreductase</keyword>
<keyword id="KW-1185">Reference proteome</keyword>
<name>MORA_ASPOR</name>
<feature type="chain" id="PRO_0000455827" description="4-methyl-2-oxopentanoate reductase A">
    <location>
        <begin position="1"/>
        <end position="329"/>
    </location>
</feature>
<feature type="active site" evidence="1">
    <location>
        <position position="242"/>
    </location>
</feature>
<feature type="active site" evidence="1">
    <location>
        <position position="271"/>
    </location>
</feature>
<feature type="active site" description="Proton donor" evidence="1">
    <location>
        <position position="289"/>
    </location>
</feature>
<feature type="binding site" evidence="1">
    <location>
        <begin position="162"/>
        <end position="163"/>
    </location>
    <ligand>
        <name>NAD(+)</name>
        <dbReference type="ChEBI" id="CHEBI:57540"/>
    </ligand>
</feature>
<feature type="binding site" evidence="1">
    <location>
        <begin position="240"/>
        <end position="242"/>
    </location>
    <ligand>
        <name>NAD(+)</name>
        <dbReference type="ChEBI" id="CHEBI:57540"/>
    </ligand>
</feature>
<feature type="binding site" evidence="1">
    <location>
        <position position="266"/>
    </location>
    <ligand>
        <name>NAD(+)</name>
        <dbReference type="ChEBI" id="CHEBI:57540"/>
    </ligand>
</feature>